<keyword id="KW-0131">Cell cycle</keyword>
<keyword id="KW-0132">Cell division</keyword>
<keyword id="KW-0963">Cytoplasm</keyword>
<keyword id="KW-1185">Reference proteome</keyword>
<keyword id="KW-0717">Septation</keyword>
<dbReference type="EMBL" id="CP000020">
    <property type="protein sequence ID" value="AAW86685.1"/>
    <property type="molecule type" value="Genomic_DNA"/>
</dbReference>
<dbReference type="RefSeq" id="WP_005420900.1">
    <property type="nucleotide sequence ID" value="NZ_CAWLES010000001.1"/>
</dbReference>
<dbReference type="RefSeq" id="YP_205573.1">
    <property type="nucleotide sequence ID" value="NC_006840.2"/>
</dbReference>
<dbReference type="SMR" id="Q5E2R1"/>
<dbReference type="STRING" id="312309.VF_2190"/>
<dbReference type="EnsemblBacteria" id="AAW86685">
    <property type="protein sequence ID" value="AAW86685"/>
    <property type="gene ID" value="VF_2190"/>
</dbReference>
<dbReference type="GeneID" id="54164907"/>
<dbReference type="KEGG" id="vfi:VF_2190"/>
<dbReference type="PATRIC" id="fig|312309.11.peg.2230"/>
<dbReference type="eggNOG" id="COG4582">
    <property type="taxonomic scope" value="Bacteria"/>
</dbReference>
<dbReference type="HOGENOM" id="CLU_076303_0_0_6"/>
<dbReference type="OrthoDB" id="5294622at2"/>
<dbReference type="Proteomes" id="UP000000537">
    <property type="component" value="Chromosome I"/>
</dbReference>
<dbReference type="GO" id="GO:0032153">
    <property type="term" value="C:cell division site"/>
    <property type="evidence" value="ECO:0007669"/>
    <property type="project" value="TreeGrafter"/>
</dbReference>
<dbReference type="GO" id="GO:0005737">
    <property type="term" value="C:cytoplasm"/>
    <property type="evidence" value="ECO:0007669"/>
    <property type="project" value="UniProtKB-SubCell"/>
</dbReference>
<dbReference type="GO" id="GO:0000917">
    <property type="term" value="P:division septum assembly"/>
    <property type="evidence" value="ECO:0007669"/>
    <property type="project" value="UniProtKB-KW"/>
</dbReference>
<dbReference type="GO" id="GO:0043093">
    <property type="term" value="P:FtsZ-dependent cytokinesis"/>
    <property type="evidence" value="ECO:0007669"/>
    <property type="project" value="UniProtKB-UniRule"/>
</dbReference>
<dbReference type="Gene3D" id="1.10.3900.10">
    <property type="entry name" value="YacF-like"/>
    <property type="match status" value="1"/>
</dbReference>
<dbReference type="Gene3D" id="2.60.440.10">
    <property type="entry name" value="YacF-like domains"/>
    <property type="match status" value="1"/>
</dbReference>
<dbReference type="HAMAP" id="MF_01092">
    <property type="entry name" value="ZapD"/>
    <property type="match status" value="1"/>
</dbReference>
<dbReference type="InterPro" id="IPR009777">
    <property type="entry name" value="ZapD"/>
</dbReference>
<dbReference type="InterPro" id="IPR027462">
    <property type="entry name" value="ZapD_C"/>
</dbReference>
<dbReference type="InterPro" id="IPR036268">
    <property type="entry name" value="ZapD_sf"/>
</dbReference>
<dbReference type="NCBIfam" id="NF003655">
    <property type="entry name" value="PRK05287.1-3"/>
    <property type="match status" value="1"/>
</dbReference>
<dbReference type="PANTHER" id="PTHR39455">
    <property type="entry name" value="CELL DIVISION PROTEIN ZAPD"/>
    <property type="match status" value="1"/>
</dbReference>
<dbReference type="PANTHER" id="PTHR39455:SF1">
    <property type="entry name" value="CELL DIVISION PROTEIN ZAPD"/>
    <property type="match status" value="1"/>
</dbReference>
<dbReference type="Pfam" id="PF07072">
    <property type="entry name" value="ZapD"/>
    <property type="match status" value="1"/>
</dbReference>
<dbReference type="SUPFAM" id="SSF160950">
    <property type="entry name" value="YacF-like"/>
    <property type="match status" value="1"/>
</dbReference>
<proteinExistence type="inferred from homology"/>
<feature type="chain" id="PRO_0000211683" description="Cell division protein ZapD">
    <location>
        <begin position="1"/>
        <end position="248"/>
    </location>
</feature>
<gene>
    <name evidence="1" type="primary">zapD</name>
    <name type="ordered locus">VF_2190</name>
</gene>
<accession>Q5E2R1</accession>
<sequence>MNGLGMQKFEHPLNERTRIYLRIESLFRKLGHSADLTQPFEYQVFFSSLFNMLDILEQVQVKAELGKDLEKLRLQYRAWMDIEGVDQSALLSVLEQISQVHQNLMQTTRPGHSLKEDRFLSALKQRFFIPGGDCCFDLPALHHWLHLPLEVRCRNTHNWMAQLLSLSDALSLWLRLTRETARFEPQIARNGFMQSEMENANLLRLEIPIDQGVYPMISGHKSRFALRFMSFETNKNCEKDIEFTLAVC</sequence>
<organism>
    <name type="scientific">Aliivibrio fischeri (strain ATCC 700601 / ES114)</name>
    <name type="common">Vibrio fischeri</name>
    <dbReference type="NCBI Taxonomy" id="312309"/>
    <lineage>
        <taxon>Bacteria</taxon>
        <taxon>Pseudomonadati</taxon>
        <taxon>Pseudomonadota</taxon>
        <taxon>Gammaproteobacteria</taxon>
        <taxon>Vibrionales</taxon>
        <taxon>Vibrionaceae</taxon>
        <taxon>Aliivibrio</taxon>
    </lineage>
</organism>
<comment type="function">
    <text evidence="1">Cell division factor that enhances FtsZ-ring assembly. Directly interacts with FtsZ and promotes bundling of FtsZ protofilaments, with a reduction in FtsZ GTPase activity.</text>
</comment>
<comment type="subunit">
    <text evidence="1">Interacts with FtsZ.</text>
</comment>
<comment type="subcellular location">
    <subcellularLocation>
        <location evidence="1">Cytoplasm</location>
    </subcellularLocation>
    <text evidence="1">Localizes to mid-cell in an FtsZ-dependent manner.</text>
</comment>
<comment type="similarity">
    <text evidence="1">Belongs to the ZapD family.</text>
</comment>
<evidence type="ECO:0000255" key="1">
    <source>
        <dbReference type="HAMAP-Rule" id="MF_01092"/>
    </source>
</evidence>
<reference key="1">
    <citation type="journal article" date="2005" name="Proc. Natl. Acad. Sci. U.S.A.">
        <title>Complete genome sequence of Vibrio fischeri: a symbiotic bacterium with pathogenic congeners.</title>
        <authorList>
            <person name="Ruby E.G."/>
            <person name="Urbanowski M."/>
            <person name="Campbell J."/>
            <person name="Dunn A."/>
            <person name="Faini M."/>
            <person name="Gunsalus R."/>
            <person name="Lostroh P."/>
            <person name="Lupp C."/>
            <person name="McCann J."/>
            <person name="Millikan D."/>
            <person name="Schaefer A."/>
            <person name="Stabb E."/>
            <person name="Stevens A."/>
            <person name="Visick K."/>
            <person name="Whistler C."/>
            <person name="Greenberg E.P."/>
        </authorList>
    </citation>
    <scope>NUCLEOTIDE SEQUENCE [LARGE SCALE GENOMIC DNA]</scope>
    <source>
        <strain>ATCC 700601 / ES114</strain>
    </source>
</reference>
<protein>
    <recommendedName>
        <fullName evidence="1">Cell division protein ZapD</fullName>
    </recommendedName>
    <alternativeName>
        <fullName evidence="1">Z ring-associated protein D</fullName>
    </alternativeName>
</protein>
<name>ZAPD_ALIF1</name>